<name>YCIB_COXBR</name>
<evidence type="ECO:0000255" key="1">
    <source>
        <dbReference type="HAMAP-Rule" id="MF_00189"/>
    </source>
</evidence>
<keyword id="KW-0997">Cell inner membrane</keyword>
<keyword id="KW-1003">Cell membrane</keyword>
<keyword id="KW-0472">Membrane</keyword>
<keyword id="KW-0812">Transmembrane</keyword>
<keyword id="KW-1133">Transmembrane helix</keyword>
<dbReference type="EMBL" id="CP000890">
    <property type="protein sequence ID" value="ABX78146.1"/>
    <property type="molecule type" value="Genomic_DNA"/>
</dbReference>
<dbReference type="RefSeq" id="WP_010957880.1">
    <property type="nucleotide sequence ID" value="NC_010117.1"/>
</dbReference>
<dbReference type="KEGG" id="cbs:COXBURSA331_A1039"/>
<dbReference type="HOGENOM" id="CLU_089554_2_0_6"/>
<dbReference type="GO" id="GO:0005886">
    <property type="term" value="C:plasma membrane"/>
    <property type="evidence" value="ECO:0007669"/>
    <property type="project" value="UniProtKB-SubCell"/>
</dbReference>
<dbReference type="HAMAP" id="MF_00189">
    <property type="entry name" value="YciB"/>
    <property type="match status" value="1"/>
</dbReference>
<dbReference type="InterPro" id="IPR006008">
    <property type="entry name" value="YciB"/>
</dbReference>
<dbReference type="NCBIfam" id="TIGR00997">
    <property type="entry name" value="ispZ"/>
    <property type="match status" value="1"/>
</dbReference>
<dbReference type="NCBIfam" id="NF001325">
    <property type="entry name" value="PRK00259.1-3"/>
    <property type="match status" value="1"/>
</dbReference>
<dbReference type="PANTHER" id="PTHR36917:SF1">
    <property type="entry name" value="INNER MEMBRANE-SPANNING PROTEIN YCIB"/>
    <property type="match status" value="1"/>
</dbReference>
<dbReference type="PANTHER" id="PTHR36917">
    <property type="entry name" value="INTRACELLULAR SEPTATION PROTEIN A-RELATED"/>
    <property type="match status" value="1"/>
</dbReference>
<dbReference type="Pfam" id="PF04279">
    <property type="entry name" value="IspA"/>
    <property type="match status" value="1"/>
</dbReference>
<gene>
    <name evidence="1" type="primary">yciB</name>
    <name type="ordered locus">COXBURSA331_A1039</name>
</gene>
<organism>
    <name type="scientific">Coxiella burnetii (strain RSA 331 / Henzerling II)</name>
    <dbReference type="NCBI Taxonomy" id="360115"/>
    <lineage>
        <taxon>Bacteria</taxon>
        <taxon>Pseudomonadati</taxon>
        <taxon>Pseudomonadota</taxon>
        <taxon>Gammaproteobacteria</taxon>
        <taxon>Legionellales</taxon>
        <taxon>Coxiellaceae</taxon>
        <taxon>Coxiella</taxon>
    </lineage>
</organism>
<sequence length="181" mass="21471">MKFLFDYFPIICFFVAYKFWGIYIATAAAMVVSALQVAIYWIRFRRFEKFHVITLIFILLLGSFTLVFHNAIFIKWKPTIVYWIFAIVLFGSHFFGKHTLVHRMLKEKIELPAKTWSRLNLSWALFFLILGVLNLFVVYNFDTNTWVNFKLFGTLVLTLVFILGQAFYIARHAQNLKMNSR</sequence>
<comment type="function">
    <text evidence="1">Plays a role in cell envelope biogenesis, maintenance of cell envelope integrity and membrane homeostasis.</text>
</comment>
<comment type="subcellular location">
    <subcellularLocation>
        <location evidence="1">Cell inner membrane</location>
        <topology evidence="1">Multi-pass membrane protein</topology>
    </subcellularLocation>
</comment>
<comment type="similarity">
    <text evidence="1">Belongs to the YciB family.</text>
</comment>
<feature type="chain" id="PRO_1000077486" description="Inner membrane-spanning protein YciB">
    <location>
        <begin position="1"/>
        <end position="181"/>
    </location>
</feature>
<feature type="transmembrane region" description="Helical" evidence="1">
    <location>
        <begin position="8"/>
        <end position="28"/>
    </location>
</feature>
<feature type="transmembrane region" description="Helical" evidence="1">
    <location>
        <begin position="53"/>
        <end position="73"/>
    </location>
</feature>
<feature type="transmembrane region" description="Helical" evidence="1">
    <location>
        <begin position="76"/>
        <end position="96"/>
    </location>
</feature>
<feature type="transmembrane region" description="Helical" evidence="1">
    <location>
        <begin position="121"/>
        <end position="141"/>
    </location>
</feature>
<feature type="transmembrane region" description="Helical" evidence="1">
    <location>
        <begin position="149"/>
        <end position="169"/>
    </location>
</feature>
<reference key="1">
    <citation type="submission" date="2007-11" db="EMBL/GenBank/DDBJ databases">
        <title>Genome sequencing of phylogenetically and phenotypically diverse Coxiella burnetii isolates.</title>
        <authorList>
            <person name="Seshadri R."/>
            <person name="Samuel J.E."/>
        </authorList>
    </citation>
    <scope>NUCLEOTIDE SEQUENCE [LARGE SCALE GENOMIC DNA]</scope>
    <source>
        <strain>RSA 331 / Henzerling II</strain>
    </source>
</reference>
<protein>
    <recommendedName>
        <fullName evidence="1">Inner membrane-spanning protein YciB</fullName>
    </recommendedName>
</protein>
<proteinExistence type="inferred from homology"/>
<accession>A9ND08</accession>